<gene>
    <name evidence="1" type="primary">gatB</name>
    <name type="ordered locus">BLi00732</name>
    <name type="ordered locus">BL00602</name>
</gene>
<keyword id="KW-0067">ATP-binding</keyword>
<keyword id="KW-0436">Ligase</keyword>
<keyword id="KW-0547">Nucleotide-binding</keyword>
<keyword id="KW-0648">Protein biosynthesis</keyword>
<keyword id="KW-1185">Reference proteome</keyword>
<name>GATB_BACLD</name>
<evidence type="ECO:0000255" key="1">
    <source>
        <dbReference type="HAMAP-Rule" id="MF_00121"/>
    </source>
</evidence>
<comment type="function">
    <text evidence="1">Allows the formation of correctly charged Asn-tRNA(Asn) or Gln-tRNA(Gln) through the transamidation of misacylated Asp-tRNA(Asn) or Glu-tRNA(Gln) in organisms which lack either or both of asparaginyl-tRNA or glutaminyl-tRNA synthetases. The reaction takes place in the presence of glutamine and ATP through an activated phospho-Asp-tRNA(Asn) or phospho-Glu-tRNA(Gln).</text>
</comment>
<comment type="catalytic activity">
    <reaction evidence="1">
        <text>L-glutamyl-tRNA(Gln) + L-glutamine + ATP + H2O = L-glutaminyl-tRNA(Gln) + L-glutamate + ADP + phosphate + H(+)</text>
        <dbReference type="Rhea" id="RHEA:17521"/>
        <dbReference type="Rhea" id="RHEA-COMP:9681"/>
        <dbReference type="Rhea" id="RHEA-COMP:9684"/>
        <dbReference type="ChEBI" id="CHEBI:15377"/>
        <dbReference type="ChEBI" id="CHEBI:15378"/>
        <dbReference type="ChEBI" id="CHEBI:29985"/>
        <dbReference type="ChEBI" id="CHEBI:30616"/>
        <dbReference type="ChEBI" id="CHEBI:43474"/>
        <dbReference type="ChEBI" id="CHEBI:58359"/>
        <dbReference type="ChEBI" id="CHEBI:78520"/>
        <dbReference type="ChEBI" id="CHEBI:78521"/>
        <dbReference type="ChEBI" id="CHEBI:456216"/>
    </reaction>
</comment>
<comment type="catalytic activity">
    <reaction evidence="1">
        <text>L-aspartyl-tRNA(Asn) + L-glutamine + ATP + H2O = L-asparaginyl-tRNA(Asn) + L-glutamate + ADP + phosphate + 2 H(+)</text>
        <dbReference type="Rhea" id="RHEA:14513"/>
        <dbReference type="Rhea" id="RHEA-COMP:9674"/>
        <dbReference type="Rhea" id="RHEA-COMP:9677"/>
        <dbReference type="ChEBI" id="CHEBI:15377"/>
        <dbReference type="ChEBI" id="CHEBI:15378"/>
        <dbReference type="ChEBI" id="CHEBI:29985"/>
        <dbReference type="ChEBI" id="CHEBI:30616"/>
        <dbReference type="ChEBI" id="CHEBI:43474"/>
        <dbReference type="ChEBI" id="CHEBI:58359"/>
        <dbReference type="ChEBI" id="CHEBI:78515"/>
        <dbReference type="ChEBI" id="CHEBI:78516"/>
        <dbReference type="ChEBI" id="CHEBI:456216"/>
    </reaction>
</comment>
<comment type="subunit">
    <text evidence="1">Heterotrimer of A, B and C subunits.</text>
</comment>
<comment type="similarity">
    <text evidence="1">Belongs to the GatB/GatE family. GatB subfamily.</text>
</comment>
<organism>
    <name type="scientific">Bacillus licheniformis (strain ATCC 14580 / DSM 13 / JCM 2505 / CCUG 7422 / NBRC 12200 / NCIMB 9375 / NCTC 10341 / NRRL NRS-1264 / Gibson 46)</name>
    <dbReference type="NCBI Taxonomy" id="279010"/>
    <lineage>
        <taxon>Bacteria</taxon>
        <taxon>Bacillati</taxon>
        <taxon>Bacillota</taxon>
        <taxon>Bacilli</taxon>
        <taxon>Bacillales</taxon>
        <taxon>Bacillaceae</taxon>
        <taxon>Bacillus</taxon>
    </lineage>
</organism>
<sequence length="476" mass="53261">MNFETVIGLEVHVELKTKSKIFSSSPTPFGAAANTQTSVIDLGYPGVLPVLNKEAVNFAMKAAMALNCEIATDTKFDRKNYFYPDNPKAYQISQFDKPIGENGWIEIEVGGKTKRIGITRLHLEEDAGKLTHTGDGYSLVDYNRQGTPLVEIVSEPDIRTPEEAYAYLEKLKSIIQYTGVSDCKMEEGSLRCDANISLRPIGQEEFGTKTELKNLNSFAFVQKGLEHEEKRQAQVLLSGGVIQQETRRYDEASKTTILMRVKEGSDDYRYFPEPDLVELYIDDEWKQRVKDSIPELPDERRKRYIEELGLPAYDAKVLTLTKEMSDFFEAAVEKGADAKLASNWLMGEVSAYLNAQQKELADVELTPEGLAGLVKLIEKGTISSKIAKKVFKELIEKGGDAEKIVKEKGLVQISDEATLRKLVTEALDNNPQSIEDFKNGKDRAIGFLVGQIMKASKGQANPPMVNKLLLEEINKR</sequence>
<proteinExistence type="inferred from homology"/>
<protein>
    <recommendedName>
        <fullName evidence="1">Aspartyl/glutamyl-tRNA(Asn/Gln) amidotransferase subunit B</fullName>
        <shortName evidence="1">Asp/Glu-ADT subunit B</shortName>
        <ecNumber evidence="1">6.3.5.-</ecNumber>
    </recommendedName>
</protein>
<accession>Q65MP7</accession>
<accession>Q62Y41</accession>
<reference key="1">
    <citation type="journal article" date="2004" name="J. Mol. Microbiol. Biotechnol.">
        <title>The complete genome sequence of Bacillus licheniformis DSM13, an organism with great industrial potential.</title>
        <authorList>
            <person name="Veith B."/>
            <person name="Herzberg C."/>
            <person name="Steckel S."/>
            <person name="Feesche J."/>
            <person name="Maurer K.H."/>
            <person name="Ehrenreich P."/>
            <person name="Baeumer S."/>
            <person name="Henne A."/>
            <person name="Liesegang H."/>
            <person name="Merkl R."/>
            <person name="Ehrenreich A."/>
            <person name="Gottschalk G."/>
        </authorList>
    </citation>
    <scope>NUCLEOTIDE SEQUENCE [LARGE SCALE GENOMIC DNA]</scope>
    <source>
        <strain>ATCC 14580 / DSM 13 / JCM 2505 / CCUG 7422 / NBRC 12200 / NCIMB 9375 / NCTC 10341 / NRRL NRS-1264 / Gibson 46</strain>
    </source>
</reference>
<reference key="2">
    <citation type="journal article" date="2004" name="Genome Biol.">
        <title>Complete genome sequence of the industrial bacterium Bacillus licheniformis and comparisons with closely related Bacillus species.</title>
        <authorList>
            <person name="Rey M.W."/>
            <person name="Ramaiya P."/>
            <person name="Nelson B.A."/>
            <person name="Brody-Karpin S.D."/>
            <person name="Zaretsky E.J."/>
            <person name="Tang M."/>
            <person name="Lopez de Leon A."/>
            <person name="Xiang H."/>
            <person name="Gusti V."/>
            <person name="Clausen I.G."/>
            <person name="Olsen P.B."/>
            <person name="Rasmussen M.D."/>
            <person name="Andersen J.T."/>
            <person name="Joergensen P.L."/>
            <person name="Larsen T.S."/>
            <person name="Sorokin A."/>
            <person name="Bolotin A."/>
            <person name="Lapidus A."/>
            <person name="Galleron N."/>
            <person name="Ehrlich S.D."/>
            <person name="Berka R.M."/>
        </authorList>
    </citation>
    <scope>NUCLEOTIDE SEQUENCE [LARGE SCALE GENOMIC DNA]</scope>
    <source>
        <strain>ATCC 14580 / DSM 13 / JCM 2505 / CCUG 7422 / NBRC 12200 / NCIMB 9375 / NCTC 10341 / NRRL NRS-1264 / Gibson 46</strain>
    </source>
</reference>
<reference key="3">
    <citation type="submission" date="2007-04" db="EMBL/GenBank/DDBJ databases">
        <authorList>
            <person name="Berka R.M."/>
            <person name="Rey M.W."/>
            <person name="Ramaiya P."/>
        </authorList>
    </citation>
    <scope>SEQUENCE REVISION TO 328</scope>
</reference>
<feature type="chain" id="PRO_0000241194" description="Aspartyl/glutamyl-tRNA(Asn/Gln) amidotransferase subunit B">
    <location>
        <begin position="1"/>
        <end position="476"/>
    </location>
</feature>
<dbReference type="EC" id="6.3.5.-" evidence="1"/>
<dbReference type="EMBL" id="AE017333">
    <property type="protein sequence ID" value="AAU39667.1"/>
    <property type="molecule type" value="Genomic_DNA"/>
</dbReference>
<dbReference type="EMBL" id="CP000002">
    <property type="protein sequence ID" value="AAU22317.2"/>
    <property type="molecule type" value="Genomic_DNA"/>
</dbReference>
<dbReference type="RefSeq" id="WP_011197621.1">
    <property type="nucleotide sequence ID" value="NC_006322.1"/>
</dbReference>
<dbReference type="SMR" id="Q65MP7"/>
<dbReference type="STRING" id="279010.BL00602"/>
<dbReference type="GeneID" id="92862687"/>
<dbReference type="KEGG" id="bld:BLi00732"/>
<dbReference type="KEGG" id="bli:BL00602"/>
<dbReference type="PATRIC" id="fig|279010.13.peg.722"/>
<dbReference type="eggNOG" id="COG0064">
    <property type="taxonomic scope" value="Bacteria"/>
</dbReference>
<dbReference type="HOGENOM" id="CLU_019240_0_0_9"/>
<dbReference type="Proteomes" id="UP000000606">
    <property type="component" value="Chromosome"/>
</dbReference>
<dbReference type="GO" id="GO:0050566">
    <property type="term" value="F:asparaginyl-tRNA synthase (glutamine-hydrolyzing) activity"/>
    <property type="evidence" value="ECO:0007669"/>
    <property type="project" value="RHEA"/>
</dbReference>
<dbReference type="GO" id="GO:0005524">
    <property type="term" value="F:ATP binding"/>
    <property type="evidence" value="ECO:0007669"/>
    <property type="project" value="UniProtKB-KW"/>
</dbReference>
<dbReference type="GO" id="GO:0050567">
    <property type="term" value="F:glutaminyl-tRNA synthase (glutamine-hydrolyzing) activity"/>
    <property type="evidence" value="ECO:0007669"/>
    <property type="project" value="UniProtKB-UniRule"/>
</dbReference>
<dbReference type="GO" id="GO:0070681">
    <property type="term" value="P:glutaminyl-tRNAGln biosynthesis via transamidation"/>
    <property type="evidence" value="ECO:0007669"/>
    <property type="project" value="TreeGrafter"/>
</dbReference>
<dbReference type="GO" id="GO:0006412">
    <property type="term" value="P:translation"/>
    <property type="evidence" value="ECO:0007669"/>
    <property type="project" value="UniProtKB-UniRule"/>
</dbReference>
<dbReference type="FunFam" id="1.10.10.410:FF:000001">
    <property type="entry name" value="Aspartyl/glutamyl-tRNA(Asn/Gln) amidotransferase subunit B"/>
    <property type="match status" value="1"/>
</dbReference>
<dbReference type="FunFam" id="1.10.150.380:FF:000001">
    <property type="entry name" value="Aspartyl/glutamyl-tRNA(Asn/Gln) amidotransferase subunit B"/>
    <property type="match status" value="1"/>
</dbReference>
<dbReference type="Gene3D" id="1.10.10.410">
    <property type="match status" value="1"/>
</dbReference>
<dbReference type="Gene3D" id="1.10.150.380">
    <property type="entry name" value="GatB domain, N-terminal subdomain"/>
    <property type="match status" value="1"/>
</dbReference>
<dbReference type="HAMAP" id="MF_00121">
    <property type="entry name" value="GatB"/>
    <property type="match status" value="1"/>
</dbReference>
<dbReference type="InterPro" id="IPR017959">
    <property type="entry name" value="Asn/Gln-tRNA_amidoTrfase_suB/E"/>
</dbReference>
<dbReference type="InterPro" id="IPR006075">
    <property type="entry name" value="Asn/Gln-tRNA_Trfase_suB/E_cat"/>
</dbReference>
<dbReference type="InterPro" id="IPR018027">
    <property type="entry name" value="Asn/Gln_amidotransferase"/>
</dbReference>
<dbReference type="InterPro" id="IPR003789">
    <property type="entry name" value="Asn/Gln_tRNA_amidoTrase-B-like"/>
</dbReference>
<dbReference type="InterPro" id="IPR004413">
    <property type="entry name" value="GatB"/>
</dbReference>
<dbReference type="InterPro" id="IPR042114">
    <property type="entry name" value="GatB_C_1"/>
</dbReference>
<dbReference type="InterPro" id="IPR023168">
    <property type="entry name" value="GatB_Yqey_C_2"/>
</dbReference>
<dbReference type="InterPro" id="IPR017958">
    <property type="entry name" value="Gln-tRNA_amidoTrfase_suB_CS"/>
</dbReference>
<dbReference type="InterPro" id="IPR014746">
    <property type="entry name" value="Gln_synth/guanido_kin_cat_dom"/>
</dbReference>
<dbReference type="NCBIfam" id="TIGR00133">
    <property type="entry name" value="gatB"/>
    <property type="match status" value="1"/>
</dbReference>
<dbReference type="NCBIfam" id="NF004011">
    <property type="entry name" value="PRK05477.1-1"/>
    <property type="match status" value="1"/>
</dbReference>
<dbReference type="NCBIfam" id="NF004012">
    <property type="entry name" value="PRK05477.1-2"/>
    <property type="match status" value="1"/>
</dbReference>
<dbReference type="NCBIfam" id="NF004014">
    <property type="entry name" value="PRK05477.1-4"/>
    <property type="match status" value="1"/>
</dbReference>
<dbReference type="PANTHER" id="PTHR11659">
    <property type="entry name" value="GLUTAMYL-TRNA GLN AMIDOTRANSFERASE SUBUNIT B MITOCHONDRIAL AND PROKARYOTIC PET112-RELATED"/>
    <property type="match status" value="1"/>
</dbReference>
<dbReference type="PANTHER" id="PTHR11659:SF0">
    <property type="entry name" value="GLUTAMYL-TRNA(GLN) AMIDOTRANSFERASE SUBUNIT B, MITOCHONDRIAL"/>
    <property type="match status" value="1"/>
</dbReference>
<dbReference type="Pfam" id="PF02934">
    <property type="entry name" value="GatB_N"/>
    <property type="match status" value="1"/>
</dbReference>
<dbReference type="Pfam" id="PF02637">
    <property type="entry name" value="GatB_Yqey"/>
    <property type="match status" value="1"/>
</dbReference>
<dbReference type="SMART" id="SM00845">
    <property type="entry name" value="GatB_Yqey"/>
    <property type="match status" value="1"/>
</dbReference>
<dbReference type="SUPFAM" id="SSF89095">
    <property type="entry name" value="GatB/YqeY motif"/>
    <property type="match status" value="1"/>
</dbReference>
<dbReference type="SUPFAM" id="SSF55931">
    <property type="entry name" value="Glutamine synthetase/guanido kinase"/>
    <property type="match status" value="1"/>
</dbReference>
<dbReference type="PROSITE" id="PS01234">
    <property type="entry name" value="GATB"/>
    <property type="match status" value="1"/>
</dbReference>